<keyword id="KW-0204">Cytolysis</keyword>
<keyword id="KW-0406">Ion transport</keyword>
<keyword id="KW-0472">Membrane</keyword>
<keyword id="KW-0166">Nematocyst</keyword>
<keyword id="KW-0964">Secreted</keyword>
<keyword id="KW-0732">Signal</keyword>
<keyword id="KW-1052">Target cell membrane</keyword>
<keyword id="KW-1053">Target membrane</keyword>
<keyword id="KW-0800">Toxin</keyword>
<keyword id="KW-0812">Transmembrane</keyword>
<keyword id="KW-0813">Transport</keyword>
<reference key="1">
    <citation type="journal article" date="2012" name="J. Proteomics">
        <title>Large-scale discovery of conopeptides and conoproteins in the injectable venom of a fish-hunting cone snail using a combined proteomic and transcriptomic approach.</title>
        <authorList>
            <person name="Violette A."/>
            <person name="Biass D."/>
            <person name="Dutertre S."/>
            <person name="Koua D."/>
            <person name="Piquemal D."/>
            <person name="Pierrat F."/>
            <person name="Stocklin R."/>
            <person name="Favreau P."/>
        </authorList>
    </citation>
    <scope>NUCLEOTIDE SEQUENCE [MRNA]</scope>
    <scope>IDENTIFICATION BY MASS SPECTROMETRY</scope>
    <source>
        <tissue>Venom</tissue>
        <tissue>Venom duct</tissue>
    </source>
</reference>
<proteinExistence type="evidence at protein level"/>
<sequence length="248" mass="27969">MGVQFPALKTMVTVFLLLMGNMSPVVMKSSIPLRKVKMVASKVVTPGSSLYGVALKDLADTSYNITCTLQVENWIRYRLIVPSVQMVYGVVTTTPIAIEPAKREAFAVRKTSDTASGVAGSVSWELEKARRRFVIMWSVPDNFNSFGYWMGLGMTREGLVDPDKDWYGQMYSGSSDGDLTFTRKDFSYNTDSIIYSNDKFEVEGDMTNTQHAQIKIVIRPSSNNWKDLAPKIRRKLKKKPKPARQRDN</sequence>
<accession>P0DKQ8</accession>
<accession>S6CRD8</accession>
<protein>
    <recommendedName>
        <fullName evidence="6">Conoporin-Cn1</fullName>
    </recommendedName>
</protein>
<comment type="function">
    <text evidence="1">Pore-forming protein that forms pores of around 1 nm and causes cardiac stimulation and cytolysis.</text>
</comment>
<comment type="subunit">
    <text evidence="2">Octamer or nonamer in membranes. Monomer in the soluble state.</text>
</comment>
<comment type="subcellular location">
    <subcellularLocation>
        <location evidence="2">Secreted</location>
    </subcellularLocation>
    <subcellularLocation>
        <location evidence="3">Nematocyst</location>
    </subcellularLocation>
    <subcellularLocation>
        <location evidence="2">Target cell membrane</location>
    </subcellularLocation>
    <text evidence="2">Forms an alpha-helical membrane channel in the prey.</text>
</comment>
<comment type="tissue specificity">
    <text evidence="8">Expressed by the venom duct.</text>
</comment>
<comment type="PTM">
    <text>9 isoforms are detected in the injectable venom, mainly corresponding to different oxidative states.</text>
</comment>
<comment type="miscellaneous">
    <text evidence="8">Found in injectable (milked) (IV) venom.</text>
</comment>
<comment type="miscellaneous">
    <text evidence="7">The mature peptide contains 1 cysteine residue.</text>
</comment>
<comment type="similarity">
    <text evidence="7">Belongs to the actinoporin family. Conoidea subfamily.</text>
</comment>
<evidence type="ECO:0000250" key="1"/>
<evidence type="ECO:0000250" key="2">
    <source>
        <dbReference type="UniProtKB" id="B9W5G6"/>
    </source>
</evidence>
<evidence type="ECO:0000250" key="3">
    <source>
        <dbReference type="UniProtKB" id="P07845"/>
    </source>
</evidence>
<evidence type="ECO:0000250" key="4">
    <source>
        <dbReference type="UniProtKB" id="P61914"/>
    </source>
</evidence>
<evidence type="ECO:0000255" key="5"/>
<evidence type="ECO:0000303" key="6">
    <source>
    </source>
</evidence>
<evidence type="ECO:0000305" key="7"/>
<evidence type="ECO:0000305" key="8">
    <source>
    </source>
</evidence>
<organism>
    <name type="scientific">Conus consors</name>
    <name type="common">Singed cone</name>
    <dbReference type="NCBI Taxonomy" id="101297"/>
    <lineage>
        <taxon>Eukaryota</taxon>
        <taxon>Metazoa</taxon>
        <taxon>Spiralia</taxon>
        <taxon>Lophotrochozoa</taxon>
        <taxon>Mollusca</taxon>
        <taxon>Gastropoda</taxon>
        <taxon>Caenogastropoda</taxon>
        <taxon>Neogastropoda</taxon>
        <taxon>Conoidea</taxon>
        <taxon>Conidae</taxon>
        <taxon>Conus</taxon>
        <taxon>Pionoconus</taxon>
    </lineage>
</organism>
<dbReference type="EMBL" id="HE856388">
    <property type="protein sequence ID" value="CCI55501.1"/>
    <property type="molecule type" value="mRNA"/>
</dbReference>
<dbReference type="SMR" id="P0DKQ8"/>
<dbReference type="ConoServer" id="5534">
    <property type="toxin name" value="Conoporin-Cn1 precursor"/>
</dbReference>
<dbReference type="GO" id="GO:0005576">
    <property type="term" value="C:extracellular region"/>
    <property type="evidence" value="ECO:0007669"/>
    <property type="project" value="UniProtKB-SubCell"/>
</dbReference>
<dbReference type="GO" id="GO:0016020">
    <property type="term" value="C:membrane"/>
    <property type="evidence" value="ECO:0007669"/>
    <property type="project" value="UniProtKB-KW"/>
</dbReference>
<dbReference type="GO" id="GO:0042151">
    <property type="term" value="C:nematocyst"/>
    <property type="evidence" value="ECO:0007669"/>
    <property type="project" value="UniProtKB-SubCell"/>
</dbReference>
<dbReference type="GO" id="GO:0044218">
    <property type="term" value="C:other organism cell membrane"/>
    <property type="evidence" value="ECO:0007669"/>
    <property type="project" value="UniProtKB-KW"/>
</dbReference>
<dbReference type="GO" id="GO:0090729">
    <property type="term" value="F:toxin activity"/>
    <property type="evidence" value="ECO:0007669"/>
    <property type="project" value="UniProtKB-KW"/>
</dbReference>
<dbReference type="GO" id="GO:0031640">
    <property type="term" value="P:killing of cells of another organism"/>
    <property type="evidence" value="ECO:0007669"/>
    <property type="project" value="UniProtKB-KW"/>
</dbReference>
<dbReference type="GO" id="GO:0006811">
    <property type="term" value="P:monoatomic ion transport"/>
    <property type="evidence" value="ECO:0007669"/>
    <property type="project" value="UniProtKB-KW"/>
</dbReference>
<dbReference type="Gene3D" id="2.60.270.20">
    <property type="entry name" value="Cytolysin/lectin"/>
    <property type="match status" value="1"/>
</dbReference>
<dbReference type="InterPro" id="IPR050677">
    <property type="entry name" value="Actinoporin_PFT"/>
</dbReference>
<dbReference type="InterPro" id="IPR015926">
    <property type="entry name" value="Cytolysin/lectin"/>
</dbReference>
<dbReference type="PANTHER" id="PTHR40388">
    <property type="entry name" value="BRYOPORIN"/>
    <property type="match status" value="1"/>
</dbReference>
<dbReference type="PANTHER" id="PTHR40388:SF1">
    <property type="entry name" value="BRYOPORIN"/>
    <property type="match status" value="1"/>
</dbReference>
<dbReference type="SUPFAM" id="SSF63724">
    <property type="entry name" value="Cytolysin/lectin"/>
    <property type="match status" value="1"/>
</dbReference>
<name>ACTP_CONCN</name>
<feature type="signal peptide" evidence="5">
    <location>
        <begin position="1"/>
        <end position="23"/>
    </location>
</feature>
<feature type="chain" id="PRO_0000419897" description="Conoporin-Cn1">
    <location>
        <begin position="24"/>
        <end position="248"/>
    </location>
</feature>
<feature type="region of interest" description="N-terminal region" evidence="4">
    <location>
        <begin position="45"/>
        <end position="64"/>
    </location>
</feature>
<feature type="binding site" evidence="3">
    <location>
        <position position="120"/>
    </location>
    <ligand>
        <name>phosphocholine</name>
        <dbReference type="ChEBI" id="CHEBI:295975"/>
    </ligand>
</feature>
<feature type="binding site" evidence="3">
    <location>
        <position position="138"/>
    </location>
    <ligand>
        <name>phosphocholine</name>
        <dbReference type="ChEBI" id="CHEBI:295975"/>
    </ligand>
</feature>
<feature type="binding site" evidence="3">
    <location>
        <position position="140"/>
    </location>
    <ligand>
        <name>phosphocholine</name>
        <dbReference type="ChEBI" id="CHEBI:295975"/>
    </ligand>
</feature>
<feature type="binding site" evidence="3">
    <location>
        <position position="167"/>
    </location>
    <ligand>
        <name>phosphocholine</name>
        <dbReference type="ChEBI" id="CHEBI:295975"/>
    </ligand>
</feature>
<feature type="binding site" evidence="3">
    <location>
        <position position="171"/>
    </location>
    <ligand>
        <name>phosphocholine</name>
        <dbReference type="ChEBI" id="CHEBI:295975"/>
    </ligand>
</feature>